<reference key="1">
    <citation type="journal article" date="2004" name="Genome Res.">
        <title>The status, quality, and expansion of the NIH full-length cDNA project: the Mammalian Gene Collection (MGC).</title>
        <authorList>
            <consortium name="The MGC Project Team"/>
        </authorList>
    </citation>
    <scope>NUCLEOTIDE SEQUENCE [LARGE SCALE MRNA]</scope>
    <source>
        <tissue>Pituitary</tissue>
    </source>
</reference>
<evidence type="ECO:0000250" key="1">
    <source>
        <dbReference type="UniProtKB" id="Q9Y548"/>
    </source>
</evidence>
<evidence type="ECO:0000255" key="2"/>
<evidence type="ECO:0000256" key="3">
    <source>
        <dbReference type="SAM" id="MobiDB-lite"/>
    </source>
</evidence>
<evidence type="ECO:0000305" key="4"/>
<comment type="subunit">
    <text evidence="1">Interacts with YIPF6; this interaction may stabilize YIPF1. May also form a ternary complex with YIPF2 and YIPF6.</text>
</comment>
<comment type="subcellular location">
    <subcellularLocation>
        <location evidence="1">Golgi apparatus</location>
        <location evidence="1">cis-Golgi network membrane</location>
        <topology evidence="1">Multi-pass membrane protein</topology>
    </subcellularLocation>
    <subcellularLocation>
        <location evidence="1">Golgi apparatus</location>
        <location evidence="1">trans-Golgi network membrane</location>
    </subcellularLocation>
    <subcellularLocation>
        <location evidence="1">Late endosome membrane</location>
    </subcellularLocation>
    <text evidence="1">Mainly localizes within medial-/trans-Golgi and trans-Golgi network (TGN), while less so within cis-Golgi.</text>
</comment>
<comment type="similarity">
    <text evidence="4">Belongs to the YIP1 family.</text>
</comment>
<dbReference type="EMBL" id="BC062239">
    <property type="protein sequence ID" value="AAH62239.1"/>
    <property type="molecule type" value="mRNA"/>
</dbReference>
<dbReference type="RefSeq" id="NP_955415.1">
    <property type="nucleotide sequence ID" value="NM_199383.2"/>
</dbReference>
<dbReference type="SMR" id="Q6P6G5"/>
<dbReference type="FunCoup" id="Q6P6G5">
    <property type="interactions" value="1893"/>
</dbReference>
<dbReference type="STRING" id="10116.ENSRNOP00000014091"/>
<dbReference type="GlyCosmos" id="Q6P6G5">
    <property type="glycosylation" value="1 site, No reported glycans"/>
</dbReference>
<dbReference type="GlyGen" id="Q6P6G5">
    <property type="glycosylation" value="1 site"/>
</dbReference>
<dbReference type="PhosphoSitePlus" id="Q6P6G5"/>
<dbReference type="PaxDb" id="10116-ENSRNOP00000014091"/>
<dbReference type="Ensembl" id="ENSRNOT00000014091.5">
    <property type="protein sequence ID" value="ENSRNOP00000014091.2"/>
    <property type="gene ID" value="ENSRNOG00000010512.7"/>
</dbReference>
<dbReference type="GeneID" id="298312"/>
<dbReference type="KEGG" id="rno:298312"/>
<dbReference type="UCSC" id="RGD:735206">
    <property type="organism name" value="rat"/>
</dbReference>
<dbReference type="AGR" id="RGD:735206"/>
<dbReference type="CTD" id="54432"/>
<dbReference type="RGD" id="735206">
    <property type="gene designation" value="Yipf1"/>
</dbReference>
<dbReference type="eggNOG" id="KOG3114">
    <property type="taxonomic scope" value="Eukaryota"/>
</dbReference>
<dbReference type="GeneTree" id="ENSGT00390000010157"/>
<dbReference type="HOGENOM" id="CLU_059606_1_0_1"/>
<dbReference type="InParanoid" id="Q6P6G5"/>
<dbReference type="OrthoDB" id="10256463at2759"/>
<dbReference type="PhylomeDB" id="Q6P6G5"/>
<dbReference type="TreeFam" id="TF313536"/>
<dbReference type="PRO" id="PR:Q6P6G5"/>
<dbReference type="Proteomes" id="UP000002494">
    <property type="component" value="Chromosome 5"/>
</dbReference>
<dbReference type="Bgee" id="ENSRNOG00000010512">
    <property type="expression patterns" value="Expressed in colon and 20 other cell types or tissues"/>
</dbReference>
<dbReference type="GO" id="GO:0005794">
    <property type="term" value="C:Golgi apparatus"/>
    <property type="evidence" value="ECO:0000318"/>
    <property type="project" value="GO_Central"/>
</dbReference>
<dbReference type="GO" id="GO:0005797">
    <property type="term" value="C:Golgi medial cisterna"/>
    <property type="evidence" value="ECO:0000250"/>
    <property type="project" value="UniProtKB"/>
</dbReference>
<dbReference type="GO" id="GO:0000138">
    <property type="term" value="C:Golgi trans cisterna"/>
    <property type="evidence" value="ECO:0000250"/>
    <property type="project" value="UniProtKB"/>
</dbReference>
<dbReference type="GO" id="GO:0031902">
    <property type="term" value="C:late endosome membrane"/>
    <property type="evidence" value="ECO:0007669"/>
    <property type="project" value="UniProtKB-SubCell"/>
</dbReference>
<dbReference type="GO" id="GO:0005802">
    <property type="term" value="C:trans-Golgi network"/>
    <property type="evidence" value="ECO:0000250"/>
    <property type="project" value="UniProtKB"/>
</dbReference>
<dbReference type="GO" id="GO:0031267">
    <property type="term" value="F:small GTPase binding"/>
    <property type="evidence" value="ECO:0007669"/>
    <property type="project" value="InterPro"/>
</dbReference>
<dbReference type="GO" id="GO:0016192">
    <property type="term" value="P:vesicle-mediated transport"/>
    <property type="evidence" value="ECO:0007669"/>
    <property type="project" value="InterPro"/>
</dbReference>
<dbReference type="InterPro" id="IPR006977">
    <property type="entry name" value="Yip1_dom"/>
</dbReference>
<dbReference type="InterPro" id="IPR039765">
    <property type="entry name" value="Yip5/YIPF1/YIPF2"/>
</dbReference>
<dbReference type="PANTHER" id="PTHR12822">
    <property type="entry name" value="PROTEIN YIPF"/>
    <property type="match status" value="1"/>
</dbReference>
<dbReference type="PANTHER" id="PTHR12822:SF4">
    <property type="entry name" value="PROTEIN YIPF1"/>
    <property type="match status" value="1"/>
</dbReference>
<dbReference type="Pfam" id="PF04893">
    <property type="entry name" value="Yip1"/>
    <property type="match status" value="1"/>
</dbReference>
<gene>
    <name type="primary">Yipf1</name>
</gene>
<feature type="chain" id="PRO_0000240871" description="Protein YIPF1">
    <location>
        <begin position="1"/>
        <end position="306"/>
    </location>
</feature>
<feature type="topological domain" description="Cytoplasmic" evidence="1">
    <location>
        <begin position="1"/>
        <end position="119"/>
    </location>
</feature>
<feature type="transmembrane region" description="Helical" evidence="2">
    <location>
        <begin position="120"/>
        <end position="140"/>
    </location>
</feature>
<feature type="topological domain" description="Lumenal" evidence="4">
    <location>
        <begin position="141"/>
        <end position="162"/>
    </location>
</feature>
<feature type="transmembrane region" description="Helical" evidence="2">
    <location>
        <begin position="163"/>
        <end position="183"/>
    </location>
</feature>
<feature type="topological domain" description="Cytoplasmic" evidence="4">
    <location>
        <begin position="184"/>
        <end position="200"/>
    </location>
</feature>
<feature type="transmembrane region" description="Helical" evidence="2">
    <location>
        <begin position="201"/>
        <end position="221"/>
    </location>
</feature>
<feature type="topological domain" description="Lumenal" evidence="4">
    <location>
        <begin position="222"/>
        <end position="227"/>
    </location>
</feature>
<feature type="transmembrane region" description="Helical" evidence="2">
    <location>
        <begin position="228"/>
        <end position="248"/>
    </location>
</feature>
<feature type="topological domain" description="Cytoplasmic" evidence="4">
    <location>
        <begin position="249"/>
        <end position="256"/>
    </location>
</feature>
<feature type="transmembrane region" description="Helical" evidence="2">
    <location>
        <begin position="257"/>
        <end position="277"/>
    </location>
</feature>
<feature type="topological domain" description="Lumenal" evidence="1">
    <location>
        <begin position="278"/>
        <end position="306"/>
    </location>
</feature>
<feature type="region of interest" description="Disordered" evidence="3">
    <location>
        <begin position="33"/>
        <end position="59"/>
    </location>
</feature>
<feature type="compositionally biased region" description="Acidic residues" evidence="3">
    <location>
        <begin position="50"/>
        <end position="59"/>
    </location>
</feature>
<feature type="glycosylation site" description="N-linked (GlcNAc...) asparagine" evidence="2">
    <location>
        <position position="297"/>
    </location>
</feature>
<sequence length="306" mass="34283">MAAVDDLQFEEFGDGATLLAANPDATTINIEDPSVSFKHQPRPPGSLGREEDEELLGTNDSDETELLAGQKKSSPFWTFEYYQTFFDVDTYQVFDRIKGSLLPVPGKNFVRLYIRSNPDLYGPFWICATLVFAIAISGNLSNFLIHLGEKTYHYVPEFQKVSIAATVIYAYAWLVPLALWGFLLWRNSKVMNIVSYSFLEIVCVYGYSLFIYIPTAVLWIIPQRVIRWVLVTIALGISGSVLAMTFWPAVREDNRRVALATIVTIMLLHVLLSVGCLAYFFDAPEMDHLPAAITTPNQTVAAAKSS</sequence>
<keyword id="KW-0967">Endosome</keyword>
<keyword id="KW-0325">Glycoprotein</keyword>
<keyword id="KW-0333">Golgi apparatus</keyword>
<keyword id="KW-0472">Membrane</keyword>
<keyword id="KW-1185">Reference proteome</keyword>
<keyword id="KW-0812">Transmembrane</keyword>
<keyword id="KW-1133">Transmembrane helix</keyword>
<organism>
    <name type="scientific">Rattus norvegicus</name>
    <name type="common">Rat</name>
    <dbReference type="NCBI Taxonomy" id="10116"/>
    <lineage>
        <taxon>Eukaryota</taxon>
        <taxon>Metazoa</taxon>
        <taxon>Chordata</taxon>
        <taxon>Craniata</taxon>
        <taxon>Vertebrata</taxon>
        <taxon>Euteleostomi</taxon>
        <taxon>Mammalia</taxon>
        <taxon>Eutheria</taxon>
        <taxon>Euarchontoglires</taxon>
        <taxon>Glires</taxon>
        <taxon>Rodentia</taxon>
        <taxon>Myomorpha</taxon>
        <taxon>Muroidea</taxon>
        <taxon>Muridae</taxon>
        <taxon>Murinae</taxon>
        <taxon>Rattus</taxon>
    </lineage>
</organism>
<proteinExistence type="evidence at transcript level"/>
<protein>
    <recommendedName>
        <fullName>Protein YIPF1</fullName>
    </recommendedName>
    <alternativeName>
        <fullName>YIP1 family member 1</fullName>
    </alternativeName>
</protein>
<accession>Q6P6G5</accession>
<name>YIPF1_RAT</name>